<organism>
    <name type="scientific">Xenopus laevis</name>
    <name type="common">African clawed frog</name>
    <dbReference type="NCBI Taxonomy" id="8355"/>
    <lineage>
        <taxon>Eukaryota</taxon>
        <taxon>Metazoa</taxon>
        <taxon>Chordata</taxon>
        <taxon>Craniata</taxon>
        <taxon>Vertebrata</taxon>
        <taxon>Euteleostomi</taxon>
        <taxon>Amphibia</taxon>
        <taxon>Batrachia</taxon>
        <taxon>Anura</taxon>
        <taxon>Pipoidea</taxon>
        <taxon>Pipidae</taxon>
        <taxon>Xenopodinae</taxon>
        <taxon>Xenopus</taxon>
        <taxon>Xenopus</taxon>
    </lineage>
</organism>
<sequence>MAVQISKKRKFVADGIFKAELNEFLTRELAEDGYSGVEVRVTPTRTEIIILATRTQNVLGEKGRRIRELTAVVQKRFGFPEGSVELYAEKVATRGLCAIAQAESLRYKLLGGLAVRRACYGVLRFIMESGAKGCEVVVSGKLRGQRAKSMKFVDGLMIHSGDPVNYYVDTAVRHVLLRQGVLGIKVKIMLPWDPSGKIGPKKPLPDHVSIVEPKDEIVPTTPISEQKAAKPDQPQPPAMPQPVATA</sequence>
<dbReference type="EC" id="4.2.99.18" evidence="1"/>
<dbReference type="EMBL" id="X57322">
    <property type="protein sequence ID" value="CAA40592.1"/>
    <property type="molecule type" value="mRNA"/>
</dbReference>
<dbReference type="EMBL" id="BC042230">
    <property type="protein sequence ID" value="AAH42230.1"/>
    <property type="molecule type" value="mRNA"/>
</dbReference>
<dbReference type="EMBL" id="V01441">
    <property type="protein sequence ID" value="CAA24702.1"/>
    <property type="status" value="ALT_SEQ"/>
    <property type="molecule type" value="mRNA"/>
</dbReference>
<dbReference type="PIR" id="S15665">
    <property type="entry name" value="R3XL3A"/>
</dbReference>
<dbReference type="PIR" id="T01065">
    <property type="entry name" value="T01065"/>
</dbReference>
<dbReference type="BMRB" id="P02350"/>
<dbReference type="SMR" id="P02350"/>
<dbReference type="BioGRID" id="103004">
    <property type="interactions" value="3"/>
</dbReference>
<dbReference type="IntAct" id="P02350">
    <property type="interactions" value="1"/>
</dbReference>
<dbReference type="DNASU" id="444841"/>
<dbReference type="GeneID" id="444841"/>
<dbReference type="KEGG" id="xla:444841"/>
<dbReference type="AGR" id="Xenbase:XB-GENE-978304"/>
<dbReference type="CTD" id="444841"/>
<dbReference type="Xenbase" id="XB-GENE-978304">
    <property type="gene designation" value="rps3.L"/>
</dbReference>
<dbReference type="OMA" id="PKDEDEY"/>
<dbReference type="OrthoDB" id="10248446at2759"/>
<dbReference type="Proteomes" id="UP000186698">
    <property type="component" value="Chromosome 2L"/>
</dbReference>
<dbReference type="Bgee" id="444841">
    <property type="expression patterns" value="Expressed in internal ear and 19 other cell types or tissues"/>
</dbReference>
<dbReference type="GO" id="GO:0022627">
    <property type="term" value="C:cytosolic small ribosomal subunit"/>
    <property type="evidence" value="ECO:0000318"/>
    <property type="project" value="GO_Central"/>
</dbReference>
<dbReference type="GO" id="GO:0005743">
    <property type="term" value="C:mitochondrial inner membrane"/>
    <property type="evidence" value="ECO:0007669"/>
    <property type="project" value="UniProtKB-SubCell"/>
</dbReference>
<dbReference type="GO" id="GO:0005730">
    <property type="term" value="C:nucleolus"/>
    <property type="evidence" value="ECO:0007669"/>
    <property type="project" value="UniProtKB-SubCell"/>
</dbReference>
<dbReference type="GO" id="GO:0005634">
    <property type="term" value="C:nucleus"/>
    <property type="evidence" value="ECO:0000318"/>
    <property type="project" value="GO_Central"/>
</dbReference>
<dbReference type="GO" id="GO:0005819">
    <property type="term" value="C:spindle"/>
    <property type="evidence" value="ECO:0007669"/>
    <property type="project" value="UniProtKB-SubCell"/>
</dbReference>
<dbReference type="GO" id="GO:0140078">
    <property type="term" value="F:class I DNA-(apurinic or apyrimidinic site) endonuclease activity"/>
    <property type="evidence" value="ECO:0007669"/>
    <property type="project" value="UniProtKB-EC"/>
</dbReference>
<dbReference type="GO" id="GO:0003677">
    <property type="term" value="F:DNA binding"/>
    <property type="evidence" value="ECO:0007669"/>
    <property type="project" value="UniProtKB-KW"/>
</dbReference>
<dbReference type="GO" id="GO:0003723">
    <property type="term" value="F:RNA binding"/>
    <property type="evidence" value="ECO:0007669"/>
    <property type="project" value="UniProtKB-KW"/>
</dbReference>
<dbReference type="GO" id="GO:0003735">
    <property type="term" value="F:structural constituent of ribosome"/>
    <property type="evidence" value="ECO:0000318"/>
    <property type="project" value="GO_Central"/>
</dbReference>
<dbReference type="GO" id="GO:0006915">
    <property type="term" value="P:apoptotic process"/>
    <property type="evidence" value="ECO:0007669"/>
    <property type="project" value="UniProtKB-KW"/>
</dbReference>
<dbReference type="GO" id="GO:0051301">
    <property type="term" value="P:cell division"/>
    <property type="evidence" value="ECO:0007669"/>
    <property type="project" value="UniProtKB-KW"/>
</dbReference>
<dbReference type="GO" id="GO:0006281">
    <property type="term" value="P:DNA repair"/>
    <property type="evidence" value="ECO:0007669"/>
    <property type="project" value="UniProtKB-KW"/>
</dbReference>
<dbReference type="GO" id="GO:2001235">
    <property type="term" value="P:positive regulation of apoptotic signaling pathway"/>
    <property type="evidence" value="ECO:0000318"/>
    <property type="project" value="GO_Central"/>
</dbReference>
<dbReference type="GO" id="GO:0006417">
    <property type="term" value="P:regulation of translation"/>
    <property type="evidence" value="ECO:0007669"/>
    <property type="project" value="UniProtKB-KW"/>
</dbReference>
<dbReference type="GO" id="GO:0006412">
    <property type="term" value="P:translation"/>
    <property type="evidence" value="ECO:0007669"/>
    <property type="project" value="InterPro"/>
</dbReference>
<dbReference type="CDD" id="cd02413">
    <property type="entry name" value="KH-II_40S_S3"/>
    <property type="match status" value="1"/>
</dbReference>
<dbReference type="FunFam" id="3.30.1140.32:FF:000005">
    <property type="entry name" value="40S ribosomal protein S3"/>
    <property type="match status" value="1"/>
</dbReference>
<dbReference type="FunFam" id="3.30.300.20:FF:000006">
    <property type="entry name" value="40S ribosomal protein S3"/>
    <property type="match status" value="1"/>
</dbReference>
<dbReference type="Gene3D" id="3.30.300.20">
    <property type="match status" value="1"/>
</dbReference>
<dbReference type="Gene3D" id="3.30.1140.32">
    <property type="entry name" value="Ribosomal protein S3, C-terminal domain"/>
    <property type="match status" value="1"/>
</dbReference>
<dbReference type="InterPro" id="IPR015946">
    <property type="entry name" value="KH_dom-like_a/b"/>
</dbReference>
<dbReference type="InterPro" id="IPR004044">
    <property type="entry name" value="KH_dom_type_2"/>
</dbReference>
<dbReference type="InterPro" id="IPR009019">
    <property type="entry name" value="KH_sf_prok-type"/>
</dbReference>
<dbReference type="InterPro" id="IPR036419">
    <property type="entry name" value="Ribosomal_S3_C_sf"/>
</dbReference>
<dbReference type="InterPro" id="IPR001351">
    <property type="entry name" value="Ribosomal_uS3_C"/>
</dbReference>
<dbReference type="InterPro" id="IPR018280">
    <property type="entry name" value="Ribosomal_uS3_CS"/>
</dbReference>
<dbReference type="InterPro" id="IPR005703">
    <property type="entry name" value="Ribosomal_uS3_euk/arc"/>
</dbReference>
<dbReference type="NCBIfam" id="NF003219">
    <property type="entry name" value="PRK04191.1"/>
    <property type="match status" value="1"/>
</dbReference>
<dbReference type="NCBIfam" id="TIGR01008">
    <property type="entry name" value="uS3_euk_arch"/>
    <property type="match status" value="1"/>
</dbReference>
<dbReference type="PANTHER" id="PTHR11760">
    <property type="entry name" value="30S/40S RIBOSOMAL PROTEIN S3"/>
    <property type="match status" value="1"/>
</dbReference>
<dbReference type="PANTHER" id="PTHR11760:SF32">
    <property type="entry name" value="SMALL RIBOSOMAL SUBUNIT PROTEIN US3"/>
    <property type="match status" value="1"/>
</dbReference>
<dbReference type="Pfam" id="PF07650">
    <property type="entry name" value="KH_2"/>
    <property type="match status" value="1"/>
</dbReference>
<dbReference type="Pfam" id="PF00189">
    <property type="entry name" value="Ribosomal_S3_C"/>
    <property type="match status" value="1"/>
</dbReference>
<dbReference type="SUPFAM" id="SSF54814">
    <property type="entry name" value="Prokaryotic type KH domain (KH-domain type II)"/>
    <property type="match status" value="1"/>
</dbReference>
<dbReference type="SUPFAM" id="SSF54821">
    <property type="entry name" value="Ribosomal protein S3 C-terminal domain"/>
    <property type="match status" value="1"/>
</dbReference>
<dbReference type="PROSITE" id="PS50823">
    <property type="entry name" value="KH_TYPE_2"/>
    <property type="match status" value="1"/>
</dbReference>
<dbReference type="PROSITE" id="PS00548">
    <property type="entry name" value="RIBOSOMAL_S3"/>
    <property type="match status" value="1"/>
</dbReference>
<reference key="1">
    <citation type="journal article" date="1991" name="Nucleic Acids Res.">
        <title>Xenopus laevis ribosomal protein S1a cDNA sequence.</title>
        <authorList>
            <person name="di Cristina M."/>
            <person name="Menard R."/>
            <person name="Pierandrei-Amaldi P."/>
        </authorList>
    </citation>
    <scope>NUCLEOTIDE SEQUENCE [MRNA]</scope>
</reference>
<reference key="2">
    <citation type="submission" date="2003-01" db="EMBL/GenBank/DDBJ databases">
        <authorList>
            <consortium name="NIH - Xenopus Gene Collection (XGC) project"/>
        </authorList>
    </citation>
    <scope>NUCLEOTIDE SEQUENCE [LARGE SCALE MRNA]</scope>
    <source>
        <tissue>Embryo</tissue>
    </source>
</reference>
<reference key="3">
    <citation type="journal article" date="1982" name="Gene">
        <title>Nucleotide sequences of cloned cDNA fragments specific for six Xenopus laevis ribosomal proteins.</title>
        <authorList>
            <person name="Amaldi F."/>
            <person name="Beccari E."/>
            <person name="Bozzoni I."/>
            <person name="Luo Z.-X."/>
            <person name="Pierandrei-Amaldi P."/>
        </authorList>
    </citation>
    <scope>PRELIMINARY PARTIAL NUCLEOTIDE SEQUENCE</scope>
</reference>
<evidence type="ECO:0000250" key="1">
    <source>
        <dbReference type="UniProtKB" id="P23396"/>
    </source>
</evidence>
<evidence type="ECO:0000255" key="2">
    <source>
        <dbReference type="PROSITE-ProRule" id="PRU00118"/>
    </source>
</evidence>
<evidence type="ECO:0000256" key="3">
    <source>
        <dbReference type="SAM" id="MobiDB-lite"/>
    </source>
</evidence>
<evidence type="ECO:0000305" key="4"/>
<feature type="chain" id="PRO_0000130325" description="Small ribosomal subunit protein uS3A">
    <location>
        <begin position="1"/>
        <end position="246"/>
    </location>
</feature>
<feature type="domain" description="KH type-2" evidence="2">
    <location>
        <begin position="21"/>
        <end position="92"/>
    </location>
</feature>
<feature type="region of interest" description="Disordered" evidence="3">
    <location>
        <begin position="215"/>
        <end position="246"/>
    </location>
</feature>
<comment type="function">
    <text evidence="1">Component of the small ribosomal subunit. The ribosome is a large ribonucleoprotein complex responsible for the synthesis of proteins in the cell. Has endonuclease activity and plays a role in repair of damaged DNA. Also involved in other processes including regulation of transcription, translation of its cognate mRNA, spindle formation and chromosome movement during mitosis, and apoptosis.</text>
</comment>
<comment type="catalytic activity">
    <reaction evidence="1">
        <text>2'-deoxyribonucleotide-(2'-deoxyribose 5'-phosphate)-2'-deoxyribonucleotide-DNA = a 3'-end 2'-deoxyribonucleotide-(2,3-dehydro-2,3-deoxyribose 5'-phosphate)-DNA + a 5'-end 5'-phospho-2'-deoxyribonucleoside-DNA + H(+)</text>
        <dbReference type="Rhea" id="RHEA:66592"/>
        <dbReference type="Rhea" id="RHEA-COMP:13180"/>
        <dbReference type="Rhea" id="RHEA-COMP:16897"/>
        <dbReference type="Rhea" id="RHEA-COMP:17067"/>
        <dbReference type="ChEBI" id="CHEBI:15378"/>
        <dbReference type="ChEBI" id="CHEBI:136412"/>
        <dbReference type="ChEBI" id="CHEBI:157695"/>
        <dbReference type="ChEBI" id="CHEBI:167181"/>
        <dbReference type="EC" id="4.2.99.18"/>
    </reaction>
</comment>
<comment type="subcellular location">
    <subcellularLocation>
        <location evidence="1">Cytoplasm</location>
    </subcellularLocation>
    <subcellularLocation>
        <location evidence="1">Nucleus</location>
    </subcellularLocation>
    <subcellularLocation>
        <location evidence="1">Nucleus</location>
        <location evidence="1">Nucleolus</location>
    </subcellularLocation>
    <subcellularLocation>
        <location evidence="1">Mitochondrion inner membrane</location>
        <topology evidence="1">Peripheral membrane protein</topology>
    </subcellularLocation>
    <subcellularLocation>
        <location evidence="1">Cytoplasm</location>
        <location evidence="1">Cytoskeleton</location>
        <location evidence="1">Spindle</location>
    </subcellularLocation>
</comment>
<comment type="similarity">
    <text evidence="4">Belongs to the universal ribosomal protein uS3 family.</text>
</comment>
<gene>
    <name type="primary">rps3-a</name>
</gene>
<accession>P02350</accession>
<accession>Q642U2</accession>
<name>RS3A_XENLA</name>
<keyword id="KW-0053">Apoptosis</keyword>
<keyword id="KW-0131">Cell cycle</keyword>
<keyword id="KW-0132">Cell division</keyword>
<keyword id="KW-0963">Cytoplasm</keyword>
<keyword id="KW-0206">Cytoskeleton</keyword>
<keyword id="KW-0227">DNA damage</keyword>
<keyword id="KW-0234">DNA repair</keyword>
<keyword id="KW-0238">DNA-binding</keyword>
<keyword id="KW-0456">Lyase</keyword>
<keyword id="KW-0472">Membrane</keyword>
<keyword id="KW-0496">Mitochondrion</keyword>
<keyword id="KW-0999">Mitochondrion inner membrane</keyword>
<keyword id="KW-0498">Mitosis</keyword>
<keyword id="KW-0539">Nucleus</keyword>
<keyword id="KW-1185">Reference proteome</keyword>
<keyword id="KW-0687">Ribonucleoprotein</keyword>
<keyword id="KW-0689">Ribosomal protein</keyword>
<keyword id="KW-0694">RNA-binding</keyword>
<keyword id="KW-0804">Transcription</keyword>
<keyword id="KW-0805">Transcription regulation</keyword>
<keyword id="KW-0810">Translation regulation</keyword>
<protein>
    <recommendedName>
        <fullName evidence="4">Small ribosomal subunit protein uS3A</fullName>
        <ecNumber evidence="1">4.2.99.18</ecNumber>
    </recommendedName>
    <alternativeName>
        <fullName>40S ribosomal protein S3</fullName>
    </alternativeName>
    <alternativeName>
        <fullName>S1A</fullName>
    </alternativeName>
</protein>
<proteinExistence type="evidence at transcript level"/>